<reference key="1">
    <citation type="journal article" date="2008" name="PLoS Genet.">
        <title>Genomic islands in the pathogenic filamentous fungus Aspergillus fumigatus.</title>
        <authorList>
            <person name="Fedorova N.D."/>
            <person name="Khaldi N."/>
            <person name="Joardar V.S."/>
            <person name="Maiti R."/>
            <person name="Amedeo P."/>
            <person name="Anderson M.J."/>
            <person name="Crabtree J."/>
            <person name="Silva J.C."/>
            <person name="Badger J.H."/>
            <person name="Albarraq A."/>
            <person name="Angiuoli S."/>
            <person name="Bussey H."/>
            <person name="Bowyer P."/>
            <person name="Cotty P.J."/>
            <person name="Dyer P.S."/>
            <person name="Egan A."/>
            <person name="Galens K."/>
            <person name="Fraser-Liggett C.M."/>
            <person name="Haas B.J."/>
            <person name="Inman J.M."/>
            <person name="Kent R."/>
            <person name="Lemieux S."/>
            <person name="Malavazi I."/>
            <person name="Orvis J."/>
            <person name="Roemer T."/>
            <person name="Ronning C.M."/>
            <person name="Sundaram J.P."/>
            <person name="Sutton G."/>
            <person name="Turner G."/>
            <person name="Venter J.C."/>
            <person name="White O.R."/>
            <person name="Whitty B.R."/>
            <person name="Youngman P."/>
            <person name="Wolfe K.H."/>
            <person name="Goldman G.H."/>
            <person name="Wortman J.R."/>
            <person name="Jiang B."/>
            <person name="Denning D.W."/>
            <person name="Nierman W.C."/>
        </authorList>
    </citation>
    <scope>NUCLEOTIDE SEQUENCE [LARGE SCALE GENOMIC DNA]</scope>
    <source>
        <strain>ATCC 1020 / DSM 3700 / CBS 544.65 / FGSC A1164 / JCM 1740 / NRRL 181 / WB 181</strain>
    </source>
</reference>
<gene>
    <name evidence="1" type="primary">clu1</name>
    <name type="synonym">tif31</name>
    <name type="ORF">NFIA_066450</name>
</gene>
<sequence length="1317" mass="146571">MAQTNGDMEHSKGWSGHFADFSTAQFRRPRSVCSSDETNGSFFLLQRLPKPNQSNSPPMVNRLKDSRKRRAAVVCRIRDTRDGWFSALVLSSLTSSVIGLFQISVKLPHEPYKIQVMVSSQEQVQDVRQSIVELPGTFQYTCFHLEFNGKRINDFVELSEVEGLKADSEIVLVEDPYTEKEARMHMVRIRDLVGAAGDRSDNLHGLNAGLSLHDAVTAEAAADDVKEHSLSKYDITASPSLETILPRVEAPLPKTVKSISLSAWNPPPYHLRQKGHLLYLQVTTNEGEQFQITSHVSGFYVNKCSNHKFDPLPRTTPKKVSAHSLLTLISKLSPSFNSAFEALQESNNKKDLLTTFPFQNAIPNSPWLVTPPSSNPNSHQADITRSQESYLVSGVDNAETLRDWNEEFQTTRELPRETVQDRVFRERLTSKLFADYNEAAARGAVLVARGEVAPLNPTEDRDAQIFVYNNIFYSFGADGVGTFVSEGGDEAARVAVGKDVLGIKAVNQLDINGLFTPGTVVVDYLGKRIVGQSIVPGIFKQREPGEHQIDYGGVEGKDVVATHPDFVSVFEKMSKALRIKKHPVWDKEGKRHELEGSVETKGLLGTDGRKYVLDLYRVTPLDVTWQEEPGSEDYPHRMSVLRLELVEAYWRSKMSQYVKAEVERRRAAKAQEEAANKEQSSEVTESKEQESEEKAEEALDQERVDISGFQLALNPDVCSGQVPQTEEEKKQWAEDEKEVRDACEFLRSKVIPELIQDLHDGDVGFPMDGQSLSQLLHKRGINIRYLGKLAQLSKEKGSRLEALTTLLVQEMIARAFKHIANRYLRNVPAPFVASCVAHLLNCLLGADVNPNPSAEIDASLREIYPEGDFSFEKVTPETLRAEVEKQVTVRYRYTLEAEWFASLRHLQVLRDIAIKLGLQLGARDYAFTKAQLPAKVPVANGVNGASHDEGKKKKKKGGDSKSPSRAVVEEKPVISIVPDDIVNVVPLVKDASPRSSLAEEALEAGRISLMQNQKQLGQELILESLSLHEQIYGILHPEVAKLYHQLSMLYYQTDEKEAAVELARKAVIVTERTLGVDSADTILAYLNLSLFEHASGNTKAALVYIKHAMDLWKIIYGSNHPDSITTMNNAAVMLQHLKQYSDSRKWFEASLAVCESLFGKQSINTATILFQLAQALALDQDSKGAVGKMRDAYNIFLNQLGPNDRNTKEAETWLEQLTQNAVSIAKHAKDIQARRLRRINMNPRVTTLGTKVQPQVGQTAPEASGAKGAANASMDSRSIDELLKFIEGGDATSSRSKQKKRAAASNPKLRGSKKSSA</sequence>
<evidence type="ECO:0000255" key="1">
    <source>
        <dbReference type="HAMAP-Rule" id="MF_03013"/>
    </source>
</evidence>
<evidence type="ECO:0000255" key="2">
    <source>
        <dbReference type="PROSITE-ProRule" id="PRU01167"/>
    </source>
</evidence>
<evidence type="ECO:0000256" key="3">
    <source>
        <dbReference type="SAM" id="MobiDB-lite"/>
    </source>
</evidence>
<protein>
    <recommendedName>
        <fullName evidence="1">Clustered mitochondria protein homolog</fullName>
    </recommendedName>
    <alternativeName>
        <fullName evidence="1">Protein TIF31 homolog</fullName>
    </alternativeName>
</protein>
<keyword id="KW-0963">Cytoplasm</keyword>
<keyword id="KW-1185">Reference proteome</keyword>
<keyword id="KW-0677">Repeat</keyword>
<keyword id="KW-0802">TPR repeat</keyword>
<comment type="function">
    <text evidence="1">mRNA-binding protein involved in proper cytoplasmic distribution of mitochondria.</text>
</comment>
<comment type="subunit">
    <text evidence="1">May associate with the eukaryotic translation initiation factor 3 (eIF-3) complex.</text>
</comment>
<comment type="subcellular location">
    <subcellularLocation>
        <location evidence="1">Cytoplasm</location>
    </subcellularLocation>
</comment>
<comment type="similarity">
    <text evidence="1">Belongs to the CLU family.</text>
</comment>
<dbReference type="EMBL" id="DS027690">
    <property type="protein sequence ID" value="EAW21481.1"/>
    <property type="molecule type" value="Genomic_DNA"/>
</dbReference>
<dbReference type="RefSeq" id="XP_001263378.1">
    <property type="nucleotide sequence ID" value="XM_001263377.1"/>
</dbReference>
<dbReference type="SMR" id="A1D6Y7"/>
<dbReference type="STRING" id="331117.A1D6Y7"/>
<dbReference type="EnsemblFungi" id="EAW21481">
    <property type="protein sequence ID" value="EAW21481"/>
    <property type="gene ID" value="NFIA_066450"/>
</dbReference>
<dbReference type="GeneID" id="4590014"/>
<dbReference type="KEGG" id="nfi:NFIA_066450"/>
<dbReference type="VEuPathDB" id="FungiDB:NFIA_066450"/>
<dbReference type="eggNOG" id="KOG1839">
    <property type="taxonomic scope" value="Eukaryota"/>
</dbReference>
<dbReference type="HOGENOM" id="CLU_003256_2_0_1"/>
<dbReference type="OMA" id="HPVWDKD"/>
<dbReference type="OrthoDB" id="1414216at2759"/>
<dbReference type="Proteomes" id="UP000006702">
    <property type="component" value="Unassembled WGS sequence"/>
</dbReference>
<dbReference type="GO" id="GO:0005737">
    <property type="term" value="C:cytoplasm"/>
    <property type="evidence" value="ECO:0007669"/>
    <property type="project" value="UniProtKB-SubCell"/>
</dbReference>
<dbReference type="GO" id="GO:0003729">
    <property type="term" value="F:mRNA binding"/>
    <property type="evidence" value="ECO:0007669"/>
    <property type="project" value="TreeGrafter"/>
</dbReference>
<dbReference type="GO" id="GO:0048312">
    <property type="term" value="P:intracellular distribution of mitochondria"/>
    <property type="evidence" value="ECO:0007669"/>
    <property type="project" value="TreeGrafter"/>
</dbReference>
<dbReference type="GO" id="GO:0007005">
    <property type="term" value="P:mitochondrion organization"/>
    <property type="evidence" value="ECO:0007669"/>
    <property type="project" value="UniProtKB-UniRule"/>
</dbReference>
<dbReference type="CDD" id="cd15466">
    <property type="entry name" value="CLU-central"/>
    <property type="match status" value="1"/>
</dbReference>
<dbReference type="FunFam" id="1.25.40.10:FF:000293">
    <property type="entry name" value="Clustered mitochondria protein homolog"/>
    <property type="match status" value="1"/>
</dbReference>
<dbReference type="FunFam" id="1.25.40.10:FF:000532">
    <property type="entry name" value="Clustered mitochondria protein homolog"/>
    <property type="match status" value="1"/>
</dbReference>
<dbReference type="FunFam" id="3.30.2280.10:FF:000002">
    <property type="entry name" value="Clustered mitochondria protein homolog"/>
    <property type="match status" value="1"/>
</dbReference>
<dbReference type="Gene3D" id="3.30.2280.10">
    <property type="entry name" value="Hypothetical protein (hspc210)"/>
    <property type="match status" value="1"/>
</dbReference>
<dbReference type="Gene3D" id="1.25.40.10">
    <property type="entry name" value="Tetratricopeptide repeat domain"/>
    <property type="match status" value="2"/>
</dbReference>
<dbReference type="HAMAP" id="MF_03013">
    <property type="entry name" value="CLU"/>
    <property type="match status" value="1"/>
</dbReference>
<dbReference type="InterPro" id="IPR033646">
    <property type="entry name" value="CLU-central"/>
</dbReference>
<dbReference type="InterPro" id="IPR025697">
    <property type="entry name" value="CLU_dom"/>
</dbReference>
<dbReference type="InterPro" id="IPR028275">
    <property type="entry name" value="CLU_N"/>
</dbReference>
<dbReference type="InterPro" id="IPR027523">
    <property type="entry name" value="CLU_prot"/>
</dbReference>
<dbReference type="InterPro" id="IPR023231">
    <property type="entry name" value="GSKIP_dom_sf"/>
</dbReference>
<dbReference type="InterPro" id="IPR011990">
    <property type="entry name" value="TPR-like_helical_dom_sf"/>
</dbReference>
<dbReference type="InterPro" id="IPR019734">
    <property type="entry name" value="TPR_rpt"/>
</dbReference>
<dbReference type="PANTHER" id="PTHR12601:SF6">
    <property type="entry name" value="CLUSTERED MITOCHONDRIA PROTEIN HOMOLOG"/>
    <property type="match status" value="1"/>
</dbReference>
<dbReference type="PANTHER" id="PTHR12601">
    <property type="entry name" value="EUKARYOTIC TRANSLATION INITIATION FACTOR 3 SUBUNIT EIF-3"/>
    <property type="match status" value="1"/>
</dbReference>
<dbReference type="Pfam" id="PF13236">
    <property type="entry name" value="CLU"/>
    <property type="match status" value="1"/>
</dbReference>
<dbReference type="Pfam" id="PF15044">
    <property type="entry name" value="CLU_N"/>
    <property type="match status" value="1"/>
</dbReference>
<dbReference type="Pfam" id="PF12807">
    <property type="entry name" value="eIF3_p135"/>
    <property type="match status" value="1"/>
</dbReference>
<dbReference type="Pfam" id="PF13374">
    <property type="entry name" value="TPR_10"/>
    <property type="match status" value="2"/>
</dbReference>
<dbReference type="Pfam" id="PF13424">
    <property type="entry name" value="TPR_12"/>
    <property type="match status" value="1"/>
</dbReference>
<dbReference type="SUPFAM" id="SSF103107">
    <property type="entry name" value="Hypothetical protein c14orf129, hspc210"/>
    <property type="match status" value="1"/>
</dbReference>
<dbReference type="SUPFAM" id="SSF48452">
    <property type="entry name" value="TPR-like"/>
    <property type="match status" value="2"/>
</dbReference>
<dbReference type="PROSITE" id="PS51823">
    <property type="entry name" value="CLU"/>
    <property type="match status" value="1"/>
</dbReference>
<dbReference type="PROSITE" id="PS50005">
    <property type="entry name" value="TPR"/>
    <property type="match status" value="1"/>
</dbReference>
<organism>
    <name type="scientific">Neosartorya fischeri (strain ATCC 1020 / DSM 3700 / CBS 544.65 / FGSC A1164 / JCM 1740 / NRRL 181 / WB 181)</name>
    <name type="common">Aspergillus fischerianus</name>
    <dbReference type="NCBI Taxonomy" id="331117"/>
    <lineage>
        <taxon>Eukaryota</taxon>
        <taxon>Fungi</taxon>
        <taxon>Dikarya</taxon>
        <taxon>Ascomycota</taxon>
        <taxon>Pezizomycotina</taxon>
        <taxon>Eurotiomycetes</taxon>
        <taxon>Eurotiomycetidae</taxon>
        <taxon>Eurotiales</taxon>
        <taxon>Aspergillaceae</taxon>
        <taxon>Aspergillus</taxon>
        <taxon>Aspergillus subgen. Fumigati</taxon>
    </lineage>
</organism>
<name>CLU_NEOFI</name>
<feature type="chain" id="PRO_0000366409" description="Clustered mitochondria protein homolog">
    <location>
        <begin position="1"/>
        <end position="1317"/>
    </location>
</feature>
<feature type="domain" description="Clu" evidence="2">
    <location>
        <begin position="382"/>
        <end position="626"/>
    </location>
</feature>
<feature type="repeat" description="TPR 1">
    <location>
        <begin position="1040"/>
        <end position="1073"/>
    </location>
</feature>
<feature type="repeat" description="TPR 2">
    <location>
        <begin position="1082"/>
        <end position="1115"/>
    </location>
</feature>
<feature type="repeat" description="TPR 3">
    <location>
        <begin position="1124"/>
        <end position="1157"/>
    </location>
</feature>
<feature type="region of interest" description="Disordered" evidence="3">
    <location>
        <begin position="669"/>
        <end position="700"/>
    </location>
</feature>
<feature type="region of interest" description="Disordered" evidence="3">
    <location>
        <begin position="939"/>
        <end position="966"/>
    </location>
</feature>
<feature type="region of interest" description="Disordered" evidence="3">
    <location>
        <begin position="1252"/>
        <end position="1273"/>
    </location>
</feature>
<feature type="region of interest" description="Disordered" evidence="3">
    <location>
        <begin position="1288"/>
        <end position="1317"/>
    </location>
</feature>
<feature type="compositionally biased region" description="Basic and acidic residues" evidence="3">
    <location>
        <begin position="669"/>
        <end position="689"/>
    </location>
</feature>
<accession>A1D6Y7</accession>
<proteinExistence type="inferred from homology"/>